<organism>
    <name type="scientific">Bos taurus</name>
    <name type="common">Bovine</name>
    <dbReference type="NCBI Taxonomy" id="9913"/>
    <lineage>
        <taxon>Eukaryota</taxon>
        <taxon>Metazoa</taxon>
        <taxon>Chordata</taxon>
        <taxon>Craniata</taxon>
        <taxon>Vertebrata</taxon>
        <taxon>Euteleostomi</taxon>
        <taxon>Mammalia</taxon>
        <taxon>Eutheria</taxon>
        <taxon>Laurasiatheria</taxon>
        <taxon>Artiodactyla</taxon>
        <taxon>Ruminantia</taxon>
        <taxon>Pecora</taxon>
        <taxon>Bovidae</taxon>
        <taxon>Bovinae</taxon>
        <taxon>Bos</taxon>
    </lineage>
</organism>
<keyword id="KW-0472">Membrane</keyword>
<keyword id="KW-0496">Mitochondrion</keyword>
<keyword id="KW-0999">Mitochondrion inner membrane</keyword>
<keyword id="KW-0539">Nucleus</keyword>
<keyword id="KW-1185">Reference proteome</keyword>
<evidence type="ECO:0000250" key="1"/>
<evidence type="ECO:0000305" key="2"/>
<comment type="function">
    <text evidence="1">Essential factor for the assembly of mitochondrial NADH:ubiquinone oxidoreductase complex (complex I).</text>
</comment>
<comment type="subunit">
    <text evidence="1">Interacts with NDUFAF4, NDUFS2 and NDUFS3.</text>
</comment>
<comment type="subcellular location">
    <subcellularLocation>
        <location evidence="1">Nucleus</location>
    </subcellularLocation>
    <subcellularLocation>
        <location evidence="1">Mitochondrion inner membrane</location>
    </subcellularLocation>
</comment>
<comment type="similarity">
    <text evidence="2">Belongs to the NDUFAF3 family.</text>
</comment>
<dbReference type="EMBL" id="BC105350">
    <property type="protein sequence ID" value="AAI05351.1"/>
    <property type="molecule type" value="mRNA"/>
</dbReference>
<dbReference type="RefSeq" id="NP_001039570.1">
    <property type="nucleotide sequence ID" value="NM_001046105.2"/>
</dbReference>
<dbReference type="RefSeq" id="XP_005222834.1">
    <property type="nucleotide sequence ID" value="XM_005222777.3"/>
</dbReference>
<dbReference type="RefSeq" id="XP_005222835.1">
    <property type="nucleotide sequence ID" value="XM_005222778.2"/>
</dbReference>
<dbReference type="RefSeq" id="XP_005222836.1">
    <property type="nucleotide sequence ID" value="XM_005222779.3"/>
</dbReference>
<dbReference type="RefSeq" id="XP_015315042.1">
    <property type="nucleotide sequence ID" value="XM_015459556.1"/>
</dbReference>
<dbReference type="RefSeq" id="XP_015315043.1">
    <property type="nucleotide sequence ID" value="XM_015459557.1"/>
</dbReference>
<dbReference type="RefSeq" id="XP_015315044.1">
    <property type="nucleotide sequence ID" value="XM_015459558.1"/>
</dbReference>
<dbReference type="SMR" id="Q2HJI2"/>
<dbReference type="FunCoup" id="Q2HJI2">
    <property type="interactions" value="1892"/>
</dbReference>
<dbReference type="STRING" id="9913.ENSBTAP00000025174"/>
<dbReference type="PaxDb" id="9913-ENSBTAP00000025174"/>
<dbReference type="GeneID" id="511968"/>
<dbReference type="KEGG" id="bta:511968"/>
<dbReference type="CTD" id="25915"/>
<dbReference type="VEuPathDB" id="HostDB:ENSBTAG00000018918"/>
<dbReference type="eggNOG" id="KOG3363">
    <property type="taxonomic scope" value="Eukaryota"/>
</dbReference>
<dbReference type="HOGENOM" id="CLU_074390_3_1_1"/>
<dbReference type="InParanoid" id="Q2HJI2"/>
<dbReference type="OMA" id="FSKAYDH"/>
<dbReference type="OrthoDB" id="20681at2759"/>
<dbReference type="TreeFam" id="TF321072"/>
<dbReference type="Reactome" id="R-BTA-6799198">
    <property type="pathway name" value="Complex I biogenesis"/>
</dbReference>
<dbReference type="Proteomes" id="UP000009136">
    <property type="component" value="Chromosome 22"/>
</dbReference>
<dbReference type="Bgee" id="ENSBTAG00000018918">
    <property type="expression patterns" value="Expressed in retina and 106 other cell types or tissues"/>
</dbReference>
<dbReference type="GO" id="GO:0005743">
    <property type="term" value="C:mitochondrial inner membrane"/>
    <property type="evidence" value="ECO:0000318"/>
    <property type="project" value="GO_Central"/>
</dbReference>
<dbReference type="GO" id="GO:0005634">
    <property type="term" value="C:nucleus"/>
    <property type="evidence" value="ECO:0007669"/>
    <property type="project" value="UniProtKB-SubCell"/>
</dbReference>
<dbReference type="GO" id="GO:0032981">
    <property type="term" value="P:mitochondrial respiratory chain complex I assembly"/>
    <property type="evidence" value="ECO:0000318"/>
    <property type="project" value="GO_Central"/>
</dbReference>
<dbReference type="CDD" id="cd05125">
    <property type="entry name" value="Mth938_2P1-like"/>
    <property type="match status" value="1"/>
</dbReference>
<dbReference type="FunFam" id="3.40.1230.10:FF:000002">
    <property type="entry name" value="NADH dehydrogenase [ubiquinone] 1 alpha subcomplex assembly factor 3"/>
    <property type="match status" value="1"/>
</dbReference>
<dbReference type="Gene3D" id="3.40.1230.10">
    <property type="entry name" value="MTH938-like"/>
    <property type="match status" value="1"/>
</dbReference>
<dbReference type="InterPro" id="IPR036748">
    <property type="entry name" value="MTH938-like_sf"/>
</dbReference>
<dbReference type="InterPro" id="IPR034095">
    <property type="entry name" value="NDUF3"/>
</dbReference>
<dbReference type="InterPro" id="IPR007523">
    <property type="entry name" value="NDUFAF3/AAMDC"/>
</dbReference>
<dbReference type="PANTHER" id="PTHR21192:SF2">
    <property type="entry name" value="NADH DEHYDROGENASE [UBIQUINONE] 1 ALPHA SUBCOMPLEX ASSEMBLY FACTOR 3"/>
    <property type="match status" value="1"/>
</dbReference>
<dbReference type="PANTHER" id="PTHR21192">
    <property type="entry name" value="NUCLEAR PROTEIN E3-3"/>
    <property type="match status" value="1"/>
</dbReference>
<dbReference type="Pfam" id="PF04430">
    <property type="entry name" value="DUF498"/>
    <property type="match status" value="1"/>
</dbReference>
<dbReference type="SUPFAM" id="SSF64076">
    <property type="entry name" value="MTH938-like"/>
    <property type="match status" value="1"/>
</dbReference>
<protein>
    <recommendedName>
        <fullName>NADH dehydrogenase [ubiquinone] 1 alpha subcomplex assembly factor 3</fullName>
    </recommendedName>
</protein>
<sequence>MAAAFVLRNLYRARPALRSPPSELPWAPRRGHRLTPADDELYQRTRISLLQRESPLAMYIDSYSSRGFVVNGNRVFGPCALLPQSVVQWNVGSYQDITEESFSLFWMLEPRIEIVVVGTGDRTERLQPHVLRAMRQRGIAVEVQDTPNACATFNFLCHEGRVTGAALIPPPGGTALTSQAQAAE</sequence>
<gene>
    <name type="primary">NDUFAF3</name>
</gene>
<accession>Q2HJI2</accession>
<name>NDUF3_BOVIN</name>
<proteinExistence type="evidence at transcript level"/>
<reference key="1">
    <citation type="submission" date="2005-09" db="EMBL/GenBank/DDBJ databases">
        <authorList>
            <consortium name="NIH - Mammalian Gene Collection (MGC) project"/>
        </authorList>
    </citation>
    <scope>NUCLEOTIDE SEQUENCE [LARGE SCALE MRNA]</scope>
    <source>
        <strain>Crossbred X Angus</strain>
        <tissue>Ileum</tissue>
    </source>
</reference>
<feature type="chain" id="PRO_0000281153" description="NADH dehydrogenase [ubiquinone] 1 alpha subcomplex assembly factor 3">
    <location>
        <begin position="1"/>
        <end position="184"/>
    </location>
</feature>